<accession>Q7W4C3</accession>
<sequence length="911" mass="103415">MVSLLKKLIGSRNDRLLKEYRKQVAQINSLEPKISALSDEELLAKTQEFRDRHQQGTSLDDLLPEAFAVVREAGKRVFGMRHFDVQMLGGIALHNGKIAEMRTGEGKTLMATLPVYLNAIAGKGVHVVTVNDYLARRDAEWMGRLYRFLGMSTGVVVPQQPNDEKIAAYAADITYGTNNEFGFDYLRDNMEYRVEDRRQRRLFYAIVDEVDSILIDEARTPLIISGQAEDHTELYVRMNAVPPLLKRMASEPKPHEPEPEGDYWVDEKSQQVYMSEAGHESAEKILTRVGLLPEGESLYDPRHIALMHHMMVALRAHTLFFRDQQYVVQDDEVVIVDEFTGRLMVGRRWSDGLHQAVEAKEGVKIQHENQTLASITFQNYFRMYDKLSGMTGTADTEAYEFQEIYTLETVIIPTNKPMVRKDQNDQVFKTTQEKYQAILNDIRDCHERGQPVLVGTTSIENSELLAGLLRQAKLPHEVLNAKQHAREAEIVAEAGKPGHITIATNMAGRGTDIVLGGSVDKQVDLIHANEALSEAEKEVRIETLRAEWKPLNERVKQAGGLRIIGTERHESRRIDNQLRGRAGRQGDPGSSRFYLSLEDPLMRIFAGDRVRAIMERLKLPEGEPIEAGMVTRSIETAQRKVEGRNFDIRKQLLEYDDVANDQRKVLYSQRNEVLEAASIGATVEGLRDAAVAEMFRGFIPEESVEEQWDVAGLEKALAGDWHIQLPLTDMLEQEPNLTDEELLERVVAAARQIYTAKVEQVGAESWAQFERSIMLQSIDTHWREHLSALDYLRQGIHLRGYAQKNPKQEYKREAFELFSGMLDRIRDDVVRVLMTVRVQSAEQVEQAEADAAQRHVQNVQYHHSDYDEALADDGQPQGAQPVRNVLPKVGRNEPCPCGSGKKYKHCHGQLA</sequence>
<dbReference type="EC" id="7.4.2.8" evidence="1"/>
<dbReference type="EMBL" id="BX640434">
    <property type="protein sequence ID" value="CAE39026.1"/>
    <property type="molecule type" value="Genomic_DNA"/>
</dbReference>
<dbReference type="RefSeq" id="WP_010929223.1">
    <property type="nucleotide sequence ID" value="NC_002928.3"/>
</dbReference>
<dbReference type="SMR" id="Q7W4C3"/>
<dbReference type="GeneID" id="93205532"/>
<dbReference type="KEGG" id="bpa:BPP3743"/>
<dbReference type="HOGENOM" id="CLU_005314_3_0_4"/>
<dbReference type="Proteomes" id="UP000001421">
    <property type="component" value="Chromosome"/>
</dbReference>
<dbReference type="GO" id="GO:0031522">
    <property type="term" value="C:cell envelope Sec protein transport complex"/>
    <property type="evidence" value="ECO:0007669"/>
    <property type="project" value="TreeGrafter"/>
</dbReference>
<dbReference type="GO" id="GO:0005829">
    <property type="term" value="C:cytosol"/>
    <property type="evidence" value="ECO:0007669"/>
    <property type="project" value="TreeGrafter"/>
</dbReference>
<dbReference type="GO" id="GO:0005886">
    <property type="term" value="C:plasma membrane"/>
    <property type="evidence" value="ECO:0007669"/>
    <property type="project" value="UniProtKB-SubCell"/>
</dbReference>
<dbReference type="GO" id="GO:0005524">
    <property type="term" value="F:ATP binding"/>
    <property type="evidence" value="ECO:0007669"/>
    <property type="project" value="UniProtKB-UniRule"/>
</dbReference>
<dbReference type="GO" id="GO:0046872">
    <property type="term" value="F:metal ion binding"/>
    <property type="evidence" value="ECO:0007669"/>
    <property type="project" value="UniProtKB-KW"/>
</dbReference>
<dbReference type="GO" id="GO:0008564">
    <property type="term" value="F:protein-exporting ATPase activity"/>
    <property type="evidence" value="ECO:0007669"/>
    <property type="project" value="UniProtKB-EC"/>
</dbReference>
<dbReference type="GO" id="GO:0065002">
    <property type="term" value="P:intracellular protein transmembrane transport"/>
    <property type="evidence" value="ECO:0007669"/>
    <property type="project" value="UniProtKB-UniRule"/>
</dbReference>
<dbReference type="GO" id="GO:0017038">
    <property type="term" value="P:protein import"/>
    <property type="evidence" value="ECO:0007669"/>
    <property type="project" value="InterPro"/>
</dbReference>
<dbReference type="GO" id="GO:0006605">
    <property type="term" value="P:protein targeting"/>
    <property type="evidence" value="ECO:0007669"/>
    <property type="project" value="UniProtKB-UniRule"/>
</dbReference>
<dbReference type="GO" id="GO:0043952">
    <property type="term" value="P:protein transport by the Sec complex"/>
    <property type="evidence" value="ECO:0007669"/>
    <property type="project" value="TreeGrafter"/>
</dbReference>
<dbReference type="CDD" id="cd17928">
    <property type="entry name" value="DEXDc_SecA"/>
    <property type="match status" value="1"/>
</dbReference>
<dbReference type="CDD" id="cd18803">
    <property type="entry name" value="SF2_C_secA"/>
    <property type="match status" value="1"/>
</dbReference>
<dbReference type="FunFam" id="3.40.50.300:FF:000113">
    <property type="entry name" value="Preprotein translocase subunit SecA"/>
    <property type="match status" value="1"/>
</dbReference>
<dbReference type="FunFam" id="3.90.1440.10:FF:000001">
    <property type="entry name" value="Preprotein translocase subunit SecA"/>
    <property type="match status" value="1"/>
</dbReference>
<dbReference type="FunFam" id="1.10.3060.10:FF:000003">
    <property type="entry name" value="Protein translocase subunit SecA"/>
    <property type="match status" value="1"/>
</dbReference>
<dbReference type="FunFam" id="3.40.50.300:FF:000334">
    <property type="entry name" value="Protein translocase subunit SecA"/>
    <property type="match status" value="1"/>
</dbReference>
<dbReference type="Gene3D" id="1.10.3060.10">
    <property type="entry name" value="Helical scaffold and wing domains of SecA"/>
    <property type="match status" value="1"/>
</dbReference>
<dbReference type="Gene3D" id="3.40.50.300">
    <property type="entry name" value="P-loop containing nucleotide triphosphate hydrolases"/>
    <property type="match status" value="2"/>
</dbReference>
<dbReference type="Gene3D" id="3.90.1440.10">
    <property type="entry name" value="SecA, preprotein cross-linking domain"/>
    <property type="match status" value="1"/>
</dbReference>
<dbReference type="HAMAP" id="MF_01382">
    <property type="entry name" value="SecA"/>
    <property type="match status" value="1"/>
</dbReference>
<dbReference type="InterPro" id="IPR014001">
    <property type="entry name" value="Helicase_ATP-bd"/>
</dbReference>
<dbReference type="InterPro" id="IPR001650">
    <property type="entry name" value="Helicase_C-like"/>
</dbReference>
<dbReference type="InterPro" id="IPR027417">
    <property type="entry name" value="P-loop_NTPase"/>
</dbReference>
<dbReference type="InterPro" id="IPR004027">
    <property type="entry name" value="SEC_C_motif"/>
</dbReference>
<dbReference type="InterPro" id="IPR000185">
    <property type="entry name" value="SecA"/>
</dbReference>
<dbReference type="InterPro" id="IPR020937">
    <property type="entry name" value="SecA_CS"/>
</dbReference>
<dbReference type="InterPro" id="IPR011115">
    <property type="entry name" value="SecA_DEAD"/>
</dbReference>
<dbReference type="InterPro" id="IPR014018">
    <property type="entry name" value="SecA_motor_DEAD"/>
</dbReference>
<dbReference type="InterPro" id="IPR011130">
    <property type="entry name" value="SecA_preprotein_X-link_dom"/>
</dbReference>
<dbReference type="InterPro" id="IPR044722">
    <property type="entry name" value="SecA_SF2_C"/>
</dbReference>
<dbReference type="InterPro" id="IPR011116">
    <property type="entry name" value="SecA_Wing/Scaffold"/>
</dbReference>
<dbReference type="InterPro" id="IPR036266">
    <property type="entry name" value="SecA_Wing/Scaffold_sf"/>
</dbReference>
<dbReference type="InterPro" id="IPR036670">
    <property type="entry name" value="SecA_X-link_sf"/>
</dbReference>
<dbReference type="NCBIfam" id="NF009538">
    <property type="entry name" value="PRK12904.1"/>
    <property type="match status" value="1"/>
</dbReference>
<dbReference type="NCBIfam" id="TIGR00963">
    <property type="entry name" value="secA"/>
    <property type="match status" value="1"/>
</dbReference>
<dbReference type="PANTHER" id="PTHR30612:SF0">
    <property type="entry name" value="CHLOROPLAST PROTEIN-TRANSPORTING ATPASE"/>
    <property type="match status" value="1"/>
</dbReference>
<dbReference type="PANTHER" id="PTHR30612">
    <property type="entry name" value="SECA INNER MEMBRANE COMPONENT OF SEC PROTEIN SECRETION SYSTEM"/>
    <property type="match status" value="1"/>
</dbReference>
<dbReference type="Pfam" id="PF21090">
    <property type="entry name" value="P-loop_SecA"/>
    <property type="match status" value="1"/>
</dbReference>
<dbReference type="Pfam" id="PF02810">
    <property type="entry name" value="SEC-C"/>
    <property type="match status" value="1"/>
</dbReference>
<dbReference type="Pfam" id="PF07517">
    <property type="entry name" value="SecA_DEAD"/>
    <property type="match status" value="1"/>
</dbReference>
<dbReference type="Pfam" id="PF01043">
    <property type="entry name" value="SecA_PP_bind"/>
    <property type="match status" value="1"/>
</dbReference>
<dbReference type="Pfam" id="PF07516">
    <property type="entry name" value="SecA_SW"/>
    <property type="match status" value="1"/>
</dbReference>
<dbReference type="PRINTS" id="PR00906">
    <property type="entry name" value="SECA"/>
</dbReference>
<dbReference type="SMART" id="SM00957">
    <property type="entry name" value="SecA_DEAD"/>
    <property type="match status" value="1"/>
</dbReference>
<dbReference type="SMART" id="SM00958">
    <property type="entry name" value="SecA_PP_bind"/>
    <property type="match status" value="1"/>
</dbReference>
<dbReference type="SUPFAM" id="SSF81886">
    <property type="entry name" value="Helical scaffold and wing domains of SecA"/>
    <property type="match status" value="1"/>
</dbReference>
<dbReference type="SUPFAM" id="SSF52540">
    <property type="entry name" value="P-loop containing nucleoside triphosphate hydrolases"/>
    <property type="match status" value="2"/>
</dbReference>
<dbReference type="SUPFAM" id="SSF81767">
    <property type="entry name" value="Pre-protein crosslinking domain of SecA"/>
    <property type="match status" value="1"/>
</dbReference>
<dbReference type="PROSITE" id="PS01312">
    <property type="entry name" value="SECA"/>
    <property type="match status" value="1"/>
</dbReference>
<dbReference type="PROSITE" id="PS51196">
    <property type="entry name" value="SECA_MOTOR_DEAD"/>
    <property type="match status" value="1"/>
</dbReference>
<organism>
    <name type="scientific">Bordetella parapertussis (strain 12822 / ATCC BAA-587 / NCTC 13253)</name>
    <dbReference type="NCBI Taxonomy" id="257311"/>
    <lineage>
        <taxon>Bacteria</taxon>
        <taxon>Pseudomonadati</taxon>
        <taxon>Pseudomonadota</taxon>
        <taxon>Betaproteobacteria</taxon>
        <taxon>Burkholderiales</taxon>
        <taxon>Alcaligenaceae</taxon>
        <taxon>Bordetella</taxon>
    </lineage>
</organism>
<comment type="function">
    <text evidence="1">Part of the Sec protein translocase complex. Interacts with the SecYEG preprotein conducting channel. Has a central role in coupling the hydrolysis of ATP to the transfer of proteins into and across the cell membrane, serving both as a receptor for the preprotein-SecB complex and as an ATP-driven molecular motor driving the stepwise translocation of polypeptide chains across the membrane.</text>
</comment>
<comment type="catalytic activity">
    <reaction evidence="1">
        <text>ATP + H2O + cellular proteinSide 1 = ADP + phosphate + cellular proteinSide 2.</text>
        <dbReference type="EC" id="7.4.2.8"/>
    </reaction>
</comment>
<comment type="cofactor">
    <cofactor evidence="1">
        <name>Zn(2+)</name>
        <dbReference type="ChEBI" id="CHEBI:29105"/>
    </cofactor>
    <text evidence="1">May bind 1 zinc ion per subunit.</text>
</comment>
<comment type="subunit">
    <text evidence="1">Monomer and homodimer. Part of the essential Sec protein translocation apparatus which comprises SecA, SecYEG and auxiliary proteins SecDF-YajC and YidC.</text>
</comment>
<comment type="subcellular location">
    <subcellularLocation>
        <location evidence="1">Cell inner membrane</location>
        <topology evidence="1">Peripheral membrane protein</topology>
        <orientation evidence="1">Cytoplasmic side</orientation>
    </subcellularLocation>
    <subcellularLocation>
        <location evidence="1">Cytoplasm</location>
    </subcellularLocation>
    <text evidence="1">Distribution is 50-50.</text>
</comment>
<comment type="similarity">
    <text evidence="1">Belongs to the SecA family.</text>
</comment>
<evidence type="ECO:0000255" key="1">
    <source>
        <dbReference type="HAMAP-Rule" id="MF_01382"/>
    </source>
</evidence>
<evidence type="ECO:0000256" key="2">
    <source>
        <dbReference type="SAM" id="MobiDB-lite"/>
    </source>
</evidence>
<proteinExistence type="inferred from homology"/>
<feature type="chain" id="PRO_0000320740" description="Protein translocase subunit SecA">
    <location>
        <begin position="1"/>
        <end position="911"/>
    </location>
</feature>
<feature type="region of interest" description="Disordered" evidence="2">
    <location>
        <begin position="869"/>
        <end position="888"/>
    </location>
</feature>
<feature type="binding site" evidence="1">
    <location>
        <position position="86"/>
    </location>
    <ligand>
        <name>ATP</name>
        <dbReference type="ChEBI" id="CHEBI:30616"/>
    </ligand>
</feature>
<feature type="binding site" evidence="1">
    <location>
        <begin position="104"/>
        <end position="108"/>
    </location>
    <ligand>
        <name>ATP</name>
        <dbReference type="ChEBI" id="CHEBI:30616"/>
    </ligand>
</feature>
<feature type="binding site" evidence="1">
    <location>
        <position position="512"/>
    </location>
    <ligand>
        <name>ATP</name>
        <dbReference type="ChEBI" id="CHEBI:30616"/>
    </ligand>
</feature>
<feature type="binding site" evidence="1">
    <location>
        <position position="895"/>
    </location>
    <ligand>
        <name>Zn(2+)</name>
        <dbReference type="ChEBI" id="CHEBI:29105"/>
    </ligand>
</feature>
<feature type="binding site" evidence="1">
    <location>
        <position position="897"/>
    </location>
    <ligand>
        <name>Zn(2+)</name>
        <dbReference type="ChEBI" id="CHEBI:29105"/>
    </ligand>
</feature>
<feature type="binding site" evidence="1">
    <location>
        <position position="906"/>
    </location>
    <ligand>
        <name>Zn(2+)</name>
        <dbReference type="ChEBI" id="CHEBI:29105"/>
    </ligand>
</feature>
<feature type="binding site" evidence="1">
    <location>
        <position position="907"/>
    </location>
    <ligand>
        <name>Zn(2+)</name>
        <dbReference type="ChEBI" id="CHEBI:29105"/>
    </ligand>
</feature>
<keyword id="KW-0067">ATP-binding</keyword>
<keyword id="KW-0997">Cell inner membrane</keyword>
<keyword id="KW-1003">Cell membrane</keyword>
<keyword id="KW-0963">Cytoplasm</keyword>
<keyword id="KW-0472">Membrane</keyword>
<keyword id="KW-0479">Metal-binding</keyword>
<keyword id="KW-0547">Nucleotide-binding</keyword>
<keyword id="KW-0653">Protein transport</keyword>
<keyword id="KW-1278">Translocase</keyword>
<keyword id="KW-0811">Translocation</keyword>
<keyword id="KW-0813">Transport</keyword>
<keyword id="KW-0862">Zinc</keyword>
<name>SECA_BORPA</name>
<gene>
    <name evidence="1" type="primary">secA</name>
    <name type="ordered locus">BPP3743</name>
</gene>
<protein>
    <recommendedName>
        <fullName evidence="1">Protein translocase subunit SecA</fullName>
        <ecNumber evidence="1">7.4.2.8</ecNumber>
    </recommendedName>
</protein>
<reference key="1">
    <citation type="journal article" date="2003" name="Nat. Genet.">
        <title>Comparative analysis of the genome sequences of Bordetella pertussis, Bordetella parapertussis and Bordetella bronchiseptica.</title>
        <authorList>
            <person name="Parkhill J."/>
            <person name="Sebaihia M."/>
            <person name="Preston A."/>
            <person name="Murphy L.D."/>
            <person name="Thomson N.R."/>
            <person name="Harris D.E."/>
            <person name="Holden M.T.G."/>
            <person name="Churcher C.M."/>
            <person name="Bentley S.D."/>
            <person name="Mungall K.L."/>
            <person name="Cerdeno-Tarraga A.-M."/>
            <person name="Temple L."/>
            <person name="James K.D."/>
            <person name="Harris B."/>
            <person name="Quail M.A."/>
            <person name="Achtman M."/>
            <person name="Atkin R."/>
            <person name="Baker S."/>
            <person name="Basham D."/>
            <person name="Bason N."/>
            <person name="Cherevach I."/>
            <person name="Chillingworth T."/>
            <person name="Collins M."/>
            <person name="Cronin A."/>
            <person name="Davis P."/>
            <person name="Doggett J."/>
            <person name="Feltwell T."/>
            <person name="Goble A."/>
            <person name="Hamlin N."/>
            <person name="Hauser H."/>
            <person name="Holroyd S."/>
            <person name="Jagels K."/>
            <person name="Leather S."/>
            <person name="Moule S."/>
            <person name="Norberczak H."/>
            <person name="O'Neil S."/>
            <person name="Ormond D."/>
            <person name="Price C."/>
            <person name="Rabbinowitsch E."/>
            <person name="Rutter S."/>
            <person name="Sanders M."/>
            <person name="Saunders D."/>
            <person name="Seeger K."/>
            <person name="Sharp S."/>
            <person name="Simmonds M."/>
            <person name="Skelton J."/>
            <person name="Squares R."/>
            <person name="Squares S."/>
            <person name="Stevens K."/>
            <person name="Unwin L."/>
            <person name="Whitehead S."/>
            <person name="Barrell B.G."/>
            <person name="Maskell D.J."/>
        </authorList>
    </citation>
    <scope>NUCLEOTIDE SEQUENCE [LARGE SCALE GENOMIC DNA]</scope>
    <source>
        <strain>12822 / ATCC BAA-587 / NCTC 13253</strain>
    </source>
</reference>